<name>RSGI6_ACET2</name>
<protein>
    <recommendedName>
        <fullName evidence="9">Anti-sigma-I factor RsgI6</fullName>
    </recommendedName>
    <alternativeName>
        <fullName evidence="9">Endo-1,4-beta-xylanase</fullName>
        <ecNumber evidence="6">3.2.1.8</ecNumber>
    </alternativeName>
</protein>
<reference key="1">
    <citation type="submission" date="2007-02" db="EMBL/GenBank/DDBJ databases">
        <title>Complete sequence of Clostridium thermocellum ATCC 27405.</title>
        <authorList>
            <consortium name="US DOE Joint Genome Institute"/>
            <person name="Copeland A."/>
            <person name="Lucas S."/>
            <person name="Lapidus A."/>
            <person name="Barry K."/>
            <person name="Detter J.C."/>
            <person name="Glavina del Rio T."/>
            <person name="Hammon N."/>
            <person name="Israni S."/>
            <person name="Dalin E."/>
            <person name="Tice H."/>
            <person name="Pitluck S."/>
            <person name="Chertkov O."/>
            <person name="Brettin T."/>
            <person name="Bruce D."/>
            <person name="Han C."/>
            <person name="Tapia R."/>
            <person name="Gilna P."/>
            <person name="Schmutz J."/>
            <person name="Larimer F."/>
            <person name="Land M."/>
            <person name="Hauser L."/>
            <person name="Kyrpides N."/>
            <person name="Mikhailova N."/>
            <person name="Wu J.H.D."/>
            <person name="Newcomb M."/>
            <person name="Richardson P."/>
        </authorList>
    </citation>
    <scope>NUCLEOTIDE SEQUENCE [LARGE SCALE GENOMIC DNA]</scope>
    <source>
        <strain>ATCC 27405 / DSM 1237 / JCM 9322 / NBRC 103400 / NCIMB 10682 / NRRL B-4536 / VPI 7372</strain>
    </source>
</reference>
<reference key="2">
    <citation type="journal article" date="2010" name="FEMS Microbiol. Lett.">
        <title>The unique set of putative membrane-associated anti-sigma factors in Clostridium thermocellum suggests a novel extracellular carbohydrate-sensing mechanism involved in gene regulation.</title>
        <authorList>
            <person name="Kahel-Raifer H."/>
            <person name="Jindou S."/>
            <person name="Bahari L."/>
            <person name="Nataf Y."/>
            <person name="Shoham Y."/>
            <person name="Bayer E.A."/>
            <person name="Borovok I."/>
            <person name="Lamed R."/>
        </authorList>
    </citation>
    <scope>NOMENCLATURE</scope>
    <source>
        <strain>ATCC 27405 / DSM 1237 / JCM 9322 / NBRC 103400 / NCIMB 10682 / NRRL B-4536 / VPI 7372</strain>
    </source>
</reference>
<reference key="3">
    <citation type="journal article" date="2010" name="Proc. Natl. Acad. Sci. U.S.A.">
        <title>Clostridium thermocellum cellulosomal genes are regulated by extracytoplasmic polysaccharides via alternative sigma factors.</title>
        <authorList>
            <person name="Nataf Y."/>
            <person name="Bahari L."/>
            <person name="Kahel-Raifer H."/>
            <person name="Borovok I."/>
            <person name="Lamed R."/>
            <person name="Bayer E.A."/>
            <person name="Sonenshein A.L."/>
            <person name="Shoham Y."/>
        </authorList>
    </citation>
    <scope>INTERACTION WITH SIGI6</scope>
</reference>
<reference key="4">
    <citation type="journal article" date="2011" name="J. Ind. Microbiol. Biotechnol.">
        <title>Glycoside hydrolases as components of putative carbohydrate biosensor proteins in Clostridium thermocellum.</title>
        <authorList>
            <person name="Bahari L."/>
            <person name="Gilad Y."/>
            <person name="Borovok I."/>
            <person name="Kahel-Raifer H."/>
            <person name="Dassa B."/>
            <person name="Nataf Y."/>
            <person name="Shoham Y."/>
            <person name="Lamed R."/>
            <person name="Bayer E.A."/>
        </authorList>
    </citation>
    <scope>FUNCTION AS A HYDROLASE</scope>
    <scope>CATALYTIC ACTIVITY</scope>
    <scope>DOMAIN</scope>
    <source>
        <strain>ATCC 27405 / DSM 1237 / JCM 9322 / NBRC 103400 / NCIMB 10682 / NRRL B-4536 / VPI 7372</strain>
    </source>
</reference>
<organism>
    <name type="scientific">Acetivibrio thermocellus (strain ATCC 27405 / DSM 1237 / JCM 9322 / NBRC 103400 / NCIMB 10682 / NRRL B-4536 / VPI 7372)</name>
    <name type="common">Clostridium thermocellum</name>
    <dbReference type="NCBI Taxonomy" id="203119"/>
    <lineage>
        <taxon>Bacteria</taxon>
        <taxon>Bacillati</taxon>
        <taxon>Bacillota</taxon>
        <taxon>Clostridia</taxon>
        <taxon>Eubacteriales</taxon>
        <taxon>Oscillospiraceae</taxon>
        <taxon>Acetivibrio</taxon>
    </lineage>
</organism>
<keyword id="KW-0119">Carbohydrate metabolism</keyword>
<keyword id="KW-1003">Cell membrane</keyword>
<keyword id="KW-0326">Glycosidase</keyword>
<keyword id="KW-0378">Hydrolase</keyword>
<keyword id="KW-0472">Membrane</keyword>
<keyword id="KW-0624">Polysaccharide degradation</keyword>
<keyword id="KW-1185">Reference proteome</keyword>
<keyword id="KW-0812">Transmembrane</keyword>
<keyword id="KW-1133">Transmembrane helix</keyword>
<keyword id="KW-0858">Xylan degradation</keyword>
<dbReference type="EC" id="3.2.1.8" evidence="6"/>
<dbReference type="EMBL" id="CP000568">
    <property type="protein sequence ID" value="ABN53326.1"/>
    <property type="molecule type" value="Genomic_DNA"/>
</dbReference>
<dbReference type="RefSeq" id="WP_003514230.1">
    <property type="nucleotide sequence ID" value="NC_009012.1"/>
</dbReference>
<dbReference type="SMR" id="A3DH97"/>
<dbReference type="DIP" id="DIP-59454N"/>
<dbReference type="IntAct" id="A3DH97">
    <property type="interactions" value="1"/>
</dbReference>
<dbReference type="STRING" id="203119.Cthe_2119"/>
<dbReference type="CAZy" id="GH10">
    <property type="family name" value="Glycoside Hydrolase Family 10"/>
</dbReference>
<dbReference type="GeneID" id="35803997"/>
<dbReference type="KEGG" id="cth:Cthe_2119"/>
<dbReference type="eggNOG" id="COG3693">
    <property type="taxonomic scope" value="Bacteria"/>
</dbReference>
<dbReference type="HOGENOM" id="CLU_366698_0_0_9"/>
<dbReference type="OrthoDB" id="9809277at2"/>
<dbReference type="UniPathway" id="UPA00114"/>
<dbReference type="Proteomes" id="UP000002145">
    <property type="component" value="Chromosome"/>
</dbReference>
<dbReference type="GO" id="GO:0005886">
    <property type="term" value="C:plasma membrane"/>
    <property type="evidence" value="ECO:0007669"/>
    <property type="project" value="UniProtKB-SubCell"/>
</dbReference>
<dbReference type="GO" id="GO:0031176">
    <property type="term" value="F:endo-1,4-beta-xylanase activity"/>
    <property type="evidence" value="ECO:0007669"/>
    <property type="project" value="UniProtKB-EC"/>
</dbReference>
<dbReference type="GO" id="GO:0045493">
    <property type="term" value="P:xylan catabolic process"/>
    <property type="evidence" value="ECO:0007669"/>
    <property type="project" value="UniProtKB-UniPathway"/>
</dbReference>
<dbReference type="Gene3D" id="3.20.20.80">
    <property type="entry name" value="Glycosidases"/>
    <property type="match status" value="1"/>
</dbReference>
<dbReference type="InterPro" id="IPR024449">
    <property type="entry name" value="Anti-sigma_RsgI_N"/>
</dbReference>
<dbReference type="InterPro" id="IPR044846">
    <property type="entry name" value="GH10"/>
</dbReference>
<dbReference type="InterPro" id="IPR001000">
    <property type="entry name" value="GH10_dom"/>
</dbReference>
<dbReference type="InterPro" id="IPR017853">
    <property type="entry name" value="Glycoside_hydrolase_SF"/>
</dbReference>
<dbReference type="InterPro" id="IPR055431">
    <property type="entry name" value="RsgI_M"/>
</dbReference>
<dbReference type="PANTHER" id="PTHR31490:SF1">
    <property type="entry name" value="ENDO-1,4-BETA-XYLANASE 1"/>
    <property type="match status" value="1"/>
</dbReference>
<dbReference type="PANTHER" id="PTHR31490">
    <property type="entry name" value="GLYCOSYL HYDROLASE"/>
    <property type="match status" value="1"/>
</dbReference>
<dbReference type="Pfam" id="PF00331">
    <property type="entry name" value="Glyco_hydro_10"/>
    <property type="match status" value="1"/>
</dbReference>
<dbReference type="Pfam" id="PF23750">
    <property type="entry name" value="RsgI_M"/>
    <property type="match status" value="1"/>
</dbReference>
<dbReference type="Pfam" id="PF12791">
    <property type="entry name" value="RsgI_N"/>
    <property type="match status" value="1"/>
</dbReference>
<dbReference type="SMART" id="SM00633">
    <property type="entry name" value="Glyco_10"/>
    <property type="match status" value="1"/>
</dbReference>
<dbReference type="SUPFAM" id="SSF51445">
    <property type="entry name" value="(Trans)glycosidases"/>
    <property type="match status" value="1"/>
</dbReference>
<dbReference type="PROSITE" id="PS51760">
    <property type="entry name" value="GH10_2"/>
    <property type="match status" value="1"/>
</dbReference>
<dbReference type="PROSITE" id="PS51849">
    <property type="entry name" value="RSGI_N"/>
    <property type="match status" value="1"/>
</dbReference>
<feature type="chain" id="PRO_0000436549" description="Anti-sigma-I factor RsgI6">
    <location>
        <begin position="1"/>
        <end position="760"/>
    </location>
</feature>
<feature type="topological domain" description="Cytoplasmic" evidence="9">
    <location>
        <begin position="1"/>
        <end position="55"/>
    </location>
</feature>
<feature type="transmembrane region" description="Helical" evidence="2">
    <location>
        <begin position="56"/>
        <end position="76"/>
    </location>
</feature>
<feature type="topological domain" description="Extracellular" evidence="9">
    <location>
        <begin position="77"/>
        <end position="760"/>
    </location>
</feature>
<feature type="domain" description="RsgI N-terminal anti-sigma" evidence="4">
    <location>
        <begin position="2"/>
        <end position="49"/>
    </location>
</feature>
<feature type="domain" description="GH10" evidence="3">
    <location>
        <begin position="402"/>
        <end position="701"/>
    </location>
</feature>
<feature type="region of interest" description="Disordered" evidence="5">
    <location>
        <begin position="274"/>
        <end position="352"/>
    </location>
</feature>
<feature type="compositionally biased region" description="Polar residues" evidence="5">
    <location>
        <begin position="291"/>
        <end position="352"/>
    </location>
</feature>
<feature type="active site" description="Proton donor" evidence="3">
    <location>
        <position position="538"/>
    </location>
</feature>
<feature type="active site" description="Nucleophile" evidence="3">
    <location>
        <position position="635"/>
    </location>
</feature>
<evidence type="ECO:0000250" key="1">
    <source>
        <dbReference type="UniProtKB" id="A3DBH1"/>
    </source>
</evidence>
<evidence type="ECO:0000255" key="2"/>
<evidence type="ECO:0000255" key="3">
    <source>
        <dbReference type="PROSITE-ProRule" id="PRU01096"/>
    </source>
</evidence>
<evidence type="ECO:0000255" key="4">
    <source>
        <dbReference type="PROSITE-ProRule" id="PRU01196"/>
    </source>
</evidence>
<evidence type="ECO:0000256" key="5">
    <source>
        <dbReference type="SAM" id="MobiDB-lite"/>
    </source>
</evidence>
<evidence type="ECO:0000269" key="6">
    <source>
    </source>
</evidence>
<evidence type="ECO:0000269" key="7">
    <source>
    </source>
</evidence>
<evidence type="ECO:0000303" key="8">
    <source>
    </source>
</evidence>
<evidence type="ECO:0000305" key="9"/>
<evidence type="ECO:0000312" key="10">
    <source>
        <dbReference type="EMBL" id="ABN53326.1"/>
    </source>
</evidence>
<proteinExistence type="evidence at protein level"/>
<accession>A3DH97</accession>
<comment type="function">
    <text evidence="1 6">Anti-sigma factor for SigI6. Negatively regulates SigI6 activity through direct interaction. Binding of the polysaccharide substrate to the extracellular C-terminal sensing domain of RsgI6 may induce a conformational change in its N-terminal cytoplasmic region, leading to the release and activation of SigI6 (By similarity). Binds to and hydrolyzes insoluble and soluble xylan substrates. Has low enzymatic activity (PubMed:20820855).</text>
</comment>
<comment type="catalytic activity">
    <reaction evidence="6">
        <text>Endohydrolysis of (1-&gt;4)-beta-D-xylosidic linkages in xylans.</text>
        <dbReference type="EC" id="3.2.1.8"/>
    </reaction>
</comment>
<comment type="pathway">
    <text evidence="3">Glycan degradation; xylan degradation.</text>
</comment>
<comment type="subunit">
    <text evidence="4 7">Interacts (via RsgI N-terminal anti-sigma domain) with SigI6.</text>
</comment>
<comment type="subcellular location">
    <subcellularLocation>
        <location evidence="9">Cell membrane</location>
        <topology evidence="2">Single-pass membrane protein</topology>
    </subcellularLocation>
</comment>
<comment type="domain">
    <text evidence="6">The GH10 domain binds to xylan.</text>
</comment>
<comment type="similarity">
    <text evidence="3">In the C-terminal section; belongs to the glycosyl hydrolase 10 (cellulase F) family.</text>
</comment>
<sequence length="760" mass="85123">MIVGKVLDMDEKTAIIMTDDFAFLNVVRTSEMAVGKKVKVLDSDIIKPKNSLRRYLPVAAVAACFVIVLSFVLMFINGNTARKNIYAYVGIDINPSIELWINYNNKIAEAKALNGDAETVLEGLELKEKTVAEAVNEIVQKSMELGFISREKENIILISTACDLKAGEGSENKDVQNKIGQLFDDVNKAVSDLKNSGITTRILNLTLEERESSKEENISMGRYAVYLKAKEQNVNLTIDEIKDADLLELIAKVGIDNENVPEDIVTEDKDNLDAINTGPAESAVPEVTETLPATSTPGRTEGNTATGSVDSTPALSKNETPGKTETPGRTFNTPAKSSLGQSSTPKPVSPVQTATATKGIGTLTPRNSPTPVIPSTGIQWIDQANERINEIRKRNVQIKVVDSSNKPIENAYVEAVLTNHAFGFGTAITRRAMYDSNYTKFIKDHFNWAVFENESKWYTNEPSMGIITYDDADYLYEFCRSNGIKVRGHCIFWEAEEWQPAWVRSLDPFTLRFAVDNRLNSAVGHFKGKFEHWDVNNEMIHGNFFKSRLGESIWPYMFNRAREIDPNAKYFVNNNITTLKEADDCVALVNWLRSQGVRVDGVGVHGHFGDSVDRNLLKGILDKLSVLNLPIWITEYDSVTPDEYRRADNLENLYRTAFSHPSVEGIVMWGFWERVHWRGRDASIVNDNWTLNEAGRRFESLMNEWTTRAYGSTDGSGSFGFRGFYGTYRITVTVPGKGKYNYTLNLNRGSGTLQTTYRIP</sequence>
<gene>
    <name evidence="8" type="primary">rsgI6</name>
    <name evidence="10" type="ordered locus">Cthe_2119</name>
</gene>